<dbReference type="EC" id="7.2.1.1" evidence="2 4"/>
<dbReference type="EMBL" id="AF117331">
    <property type="protein sequence ID" value="AAD29964.1"/>
    <property type="molecule type" value="Genomic_DNA"/>
</dbReference>
<dbReference type="EMBL" id="CP000627">
    <property type="protein sequence ID" value="ABQ20333.1"/>
    <property type="molecule type" value="Genomic_DNA"/>
</dbReference>
<dbReference type="EMBL" id="CP001235">
    <property type="protein sequence ID" value="ACP10399.1"/>
    <property type="molecule type" value="Genomic_DNA"/>
</dbReference>
<dbReference type="RefSeq" id="WP_000157902.1">
    <property type="nucleotide sequence ID" value="NZ_JAACZH010000008.1"/>
</dbReference>
<dbReference type="PDB" id="4U9S">
    <property type="method" value="X-ray"/>
    <property type="resolution" value="1.70 A"/>
    <property type="chains" value="C=44-257"/>
</dbReference>
<dbReference type="PDB" id="7XK3">
    <property type="method" value="EM"/>
    <property type="resolution" value="3.10 A"/>
    <property type="chains" value="C=1-257"/>
</dbReference>
<dbReference type="PDB" id="7XK4">
    <property type="method" value="EM"/>
    <property type="resolution" value="3.10 A"/>
    <property type="chains" value="C=1-257"/>
</dbReference>
<dbReference type="PDB" id="7XK5">
    <property type="method" value="EM"/>
    <property type="resolution" value="3.10 A"/>
    <property type="chains" value="C=1-257"/>
</dbReference>
<dbReference type="PDB" id="7XK6">
    <property type="method" value="EM"/>
    <property type="resolution" value="3.00 A"/>
    <property type="chains" value="C=1-257"/>
</dbReference>
<dbReference type="PDB" id="7XK7">
    <property type="method" value="EM"/>
    <property type="resolution" value="2.90 A"/>
    <property type="chains" value="C=1-257"/>
</dbReference>
<dbReference type="PDB" id="8A1T">
    <property type="method" value="EM"/>
    <property type="resolution" value="3.37 A"/>
    <property type="chains" value="C=1-257"/>
</dbReference>
<dbReference type="PDB" id="8A1V">
    <property type="method" value="EM"/>
    <property type="resolution" value="2.73 A"/>
    <property type="chains" value="C=1-257"/>
</dbReference>
<dbReference type="PDB" id="8A1W">
    <property type="method" value="EM"/>
    <property type="resolution" value="2.56 A"/>
    <property type="chains" value="C=1-257"/>
</dbReference>
<dbReference type="PDB" id="8A1X">
    <property type="method" value="EM"/>
    <property type="resolution" value="3.20 A"/>
    <property type="chains" value="C=1-257"/>
</dbReference>
<dbReference type="PDB" id="8A1Y">
    <property type="method" value="EM"/>
    <property type="resolution" value="3.30 A"/>
    <property type="chains" value="C=1-257"/>
</dbReference>
<dbReference type="PDB" id="8ACW">
    <property type="method" value="X-ray"/>
    <property type="resolution" value="3.40 A"/>
    <property type="chains" value="C=1-257"/>
</dbReference>
<dbReference type="PDB" id="8AD0">
    <property type="method" value="X-ray"/>
    <property type="resolution" value="3.11 A"/>
    <property type="chains" value="C=1-257"/>
</dbReference>
<dbReference type="PDB" id="8EW3">
    <property type="method" value="EM"/>
    <property type="resolution" value="2.65 A"/>
    <property type="chains" value="C=1-257"/>
</dbReference>
<dbReference type="PDBsum" id="4U9S"/>
<dbReference type="PDBsum" id="7XK3"/>
<dbReference type="PDBsum" id="7XK4"/>
<dbReference type="PDBsum" id="7XK5"/>
<dbReference type="PDBsum" id="7XK6"/>
<dbReference type="PDBsum" id="7XK7"/>
<dbReference type="PDBsum" id="8A1T"/>
<dbReference type="PDBsum" id="8A1V"/>
<dbReference type="PDBsum" id="8A1W"/>
<dbReference type="PDBsum" id="8A1X"/>
<dbReference type="PDBsum" id="8A1Y"/>
<dbReference type="PDBsum" id="8ACW"/>
<dbReference type="PDBsum" id="8AD0"/>
<dbReference type="PDBsum" id="8EW3"/>
<dbReference type="EMDB" id="EMD-33242"/>
<dbReference type="EMDB" id="EMD-33243"/>
<dbReference type="EMDB" id="EMD-33244"/>
<dbReference type="EMDB" id="EMD-33245"/>
<dbReference type="EMDB" id="EMD-33246"/>
<dbReference type="SMR" id="A5F5Y7"/>
<dbReference type="KEGG" id="vco:VC0395_A1882"/>
<dbReference type="KEGG" id="vcr:VC395_2409"/>
<dbReference type="PATRIC" id="fig|345073.21.peg.2322"/>
<dbReference type="eggNOG" id="COG2869">
    <property type="taxonomic scope" value="Bacteria"/>
</dbReference>
<dbReference type="HOGENOM" id="CLU_077882_0_1_6"/>
<dbReference type="OrthoDB" id="9786835at2"/>
<dbReference type="BRENDA" id="7.2.1.1">
    <property type="organism ID" value="15862"/>
</dbReference>
<dbReference type="EvolutionaryTrace" id="A5F5Y7"/>
<dbReference type="Proteomes" id="UP000000249">
    <property type="component" value="Chromosome 2"/>
</dbReference>
<dbReference type="GO" id="GO:0005886">
    <property type="term" value="C:plasma membrane"/>
    <property type="evidence" value="ECO:0007669"/>
    <property type="project" value="UniProtKB-SubCell"/>
</dbReference>
<dbReference type="GO" id="GO:0010181">
    <property type="term" value="F:FMN binding"/>
    <property type="evidence" value="ECO:0000314"/>
    <property type="project" value="UniProtKB"/>
</dbReference>
<dbReference type="GO" id="GO:0016655">
    <property type="term" value="F:oxidoreductase activity, acting on NAD(P)H, quinone or similar compound as acceptor"/>
    <property type="evidence" value="ECO:0000314"/>
    <property type="project" value="UniProtKB"/>
</dbReference>
<dbReference type="GO" id="GO:0006814">
    <property type="term" value="P:sodium ion transport"/>
    <property type="evidence" value="ECO:0000314"/>
    <property type="project" value="UniProtKB"/>
</dbReference>
<dbReference type="HAMAP" id="MF_00427">
    <property type="entry name" value="NqrC"/>
    <property type="match status" value="1"/>
</dbReference>
<dbReference type="InterPro" id="IPR007329">
    <property type="entry name" value="FMN-bd"/>
</dbReference>
<dbReference type="InterPro" id="IPR010204">
    <property type="entry name" value="NqrC"/>
</dbReference>
<dbReference type="NCBIfam" id="TIGR01938">
    <property type="entry name" value="nqrC"/>
    <property type="match status" value="1"/>
</dbReference>
<dbReference type="NCBIfam" id="NF003746">
    <property type="entry name" value="PRK05346.1-1"/>
    <property type="match status" value="1"/>
</dbReference>
<dbReference type="NCBIfam" id="NF003749">
    <property type="entry name" value="PRK05346.1-5"/>
    <property type="match status" value="1"/>
</dbReference>
<dbReference type="PANTHER" id="PTHR37838">
    <property type="entry name" value="NA(+)-TRANSLOCATING NADH-QUINONE REDUCTASE SUBUNIT C"/>
    <property type="match status" value="1"/>
</dbReference>
<dbReference type="PANTHER" id="PTHR37838:SF1">
    <property type="entry name" value="NA(+)-TRANSLOCATING NADH-QUINONE REDUCTASE SUBUNIT C"/>
    <property type="match status" value="1"/>
</dbReference>
<dbReference type="Pfam" id="PF04205">
    <property type="entry name" value="FMN_bind"/>
    <property type="match status" value="1"/>
</dbReference>
<dbReference type="PIRSF" id="PIRSF009437">
    <property type="entry name" value="NQR-1_subunit_C"/>
    <property type="match status" value="1"/>
</dbReference>
<dbReference type="SMART" id="SM00900">
    <property type="entry name" value="FMN_bind"/>
    <property type="match status" value="1"/>
</dbReference>
<proteinExistence type="evidence at protein level"/>
<keyword id="KW-0002">3D-structure</keyword>
<keyword id="KW-0997">Cell inner membrane</keyword>
<keyword id="KW-1003">Cell membrane</keyword>
<keyword id="KW-0285">Flavoprotein</keyword>
<keyword id="KW-0288">FMN</keyword>
<keyword id="KW-0406">Ion transport</keyword>
<keyword id="KW-0472">Membrane</keyword>
<keyword id="KW-0520">NAD</keyword>
<keyword id="KW-0597">Phosphoprotein</keyword>
<keyword id="KW-0915">Sodium</keyword>
<keyword id="KW-0739">Sodium transport</keyword>
<keyword id="KW-1278">Translocase</keyword>
<keyword id="KW-0812">Transmembrane</keyword>
<keyword id="KW-1133">Transmembrane helix</keyword>
<keyword id="KW-0813">Transport</keyword>
<keyword id="KW-0830">Ubiquinone</keyword>
<comment type="function">
    <text evidence="2">NQR complex catalyzes the reduction of ubiquinone-1 to ubiquinol by two successive reactions, coupled with the transport of Na(+) ions from the cytoplasm to the periplasm. NqrA to NqrE are probably involved in the second step, the conversion of ubisemiquinone to ubiquinol.</text>
</comment>
<comment type="catalytic activity">
    <reaction evidence="2 4">
        <text>a ubiquinone + n Na(+)(in) + NADH + H(+) = a ubiquinol + n Na(+)(out) + NAD(+)</text>
        <dbReference type="Rhea" id="RHEA:47748"/>
        <dbReference type="Rhea" id="RHEA-COMP:9565"/>
        <dbReference type="Rhea" id="RHEA-COMP:9566"/>
        <dbReference type="ChEBI" id="CHEBI:15378"/>
        <dbReference type="ChEBI" id="CHEBI:16389"/>
        <dbReference type="ChEBI" id="CHEBI:17976"/>
        <dbReference type="ChEBI" id="CHEBI:29101"/>
        <dbReference type="ChEBI" id="CHEBI:57540"/>
        <dbReference type="ChEBI" id="CHEBI:57945"/>
        <dbReference type="EC" id="7.2.1.1"/>
    </reaction>
</comment>
<comment type="cofactor">
    <cofactor evidence="2 3 4 6">
        <name>FMN</name>
        <dbReference type="ChEBI" id="CHEBI:58210"/>
    </cofactor>
</comment>
<comment type="subunit">
    <text evidence="2 4 5">Composed of six subunits; NqrA, NqrB, NqrC, NqrD, NqrE and NqrF.</text>
</comment>
<comment type="subcellular location">
    <subcellularLocation>
        <location evidence="2 8">Cell inner membrane</location>
        <topology evidence="2">Single-pass membrane protein</topology>
    </subcellularLocation>
</comment>
<comment type="similarity">
    <text evidence="2 8">Belongs to the NqrC family.</text>
</comment>
<reference key="1">
    <citation type="journal article" date="1999" name="Proc. Natl. Acad. Sci. U.S.A.">
        <title>Effects of changes in membrane sodium flux on virulence gene expression in Vibrio cholerae.</title>
        <authorList>
            <person name="Haese C.C."/>
            <person name="Mekalanos J.J."/>
        </authorList>
    </citation>
    <scope>NUCLEOTIDE SEQUENCE [GENOMIC DNA]</scope>
</reference>
<reference key="2">
    <citation type="submission" date="2007-03" db="EMBL/GenBank/DDBJ databases">
        <authorList>
            <person name="Heidelberg J."/>
        </authorList>
    </citation>
    <scope>NUCLEOTIDE SEQUENCE [LARGE SCALE GENOMIC DNA]</scope>
    <source>
        <strain>ATCC 39541 / Classical Ogawa 395 / O395</strain>
    </source>
</reference>
<reference key="3">
    <citation type="journal article" date="2008" name="PLoS ONE">
        <title>A recalibrated molecular clock and independent origins for the cholera pandemic clones.</title>
        <authorList>
            <person name="Feng L."/>
            <person name="Reeves P.R."/>
            <person name="Lan R."/>
            <person name="Ren Y."/>
            <person name="Gao C."/>
            <person name="Zhou Z."/>
            <person name="Ren Y."/>
            <person name="Cheng J."/>
            <person name="Wang W."/>
            <person name="Wang J."/>
            <person name="Qian W."/>
            <person name="Li D."/>
            <person name="Wang L."/>
        </authorList>
    </citation>
    <scope>NUCLEOTIDE SEQUENCE [LARGE SCALE GENOMIC DNA]</scope>
    <source>
        <strain>ATCC 39541 / Classical Ogawa 395 / O395</strain>
    </source>
</reference>
<reference key="4">
    <citation type="journal article" date="2001" name="FEBS Lett.">
        <title>Expression and mutagenesis of the NqrC subunit of the NQR respiratory Na(+) pump from Vibrio cholerae with covalently attached FMN.</title>
        <authorList>
            <person name="Barquera B."/>
            <person name="Haese C.C."/>
            <person name="Gennis R.B."/>
        </authorList>
    </citation>
    <scope>COFACTOR</scope>
    <scope>MUTAGENESIS OF HIS-216 AND THR-225</scope>
    <source>
        <strain>ATCC 39541 / Classical Ogawa 395 / O395</strain>
    </source>
</reference>
<reference key="5">
    <citation type="journal article" date="2002" name="Biochemistry">
        <title>Purification and characterization of the recombinant Na(+)-translocating NADH:quinone oxidoreductase from Vibrio cholerae.</title>
        <authorList>
            <person name="Barquera B."/>
            <person name="Hellwig P."/>
            <person name="Zhou W."/>
            <person name="Morgan J.E."/>
            <person name="Haese C.C."/>
            <person name="Gosink K.K."/>
            <person name="Nilges M."/>
            <person name="Bruesehoff P.J."/>
            <person name="Roth A."/>
            <person name="Lancaster C.R."/>
            <person name="Gennis R.B."/>
        </authorList>
    </citation>
    <scope>CATALYTIC ACTIVITY</scope>
    <scope>SUBUNIT</scope>
    <scope>COFACTOR</scope>
    <source>
        <strain>ATCC 39541 / Classical Ogawa 395 / O395</strain>
    </source>
</reference>
<reference key="6">
    <citation type="journal article" date="2010" name="J. Biol. Chem.">
        <title>Localization and function of the membrane-bound riboflavin in the Na+-translocating NADH:quinone oxidoreductase (Na+-NQR) from Vibrio cholerae.</title>
        <authorList>
            <person name="Casutt M.S."/>
            <person name="Huber T."/>
            <person name="Brunisholz R."/>
            <person name="Tao M."/>
            <person name="Fritz G."/>
            <person name="Steuber J."/>
        </authorList>
    </citation>
    <scope>SUBUNIT</scope>
    <source>
        <strain>ATCC 39541 / Classical Ogawa 395 / O395</strain>
    </source>
</reference>
<reference key="7">
    <citation type="journal article" date="2012" name="Biochim. Biophys. Acta">
        <title>The single NqrB and NqrC subunits in the Na(+)-translocating NADH: quinone oxidoreductase (Na(+)-NQR) from Vibrio cholerae each carry one covalently attached FMN.</title>
        <authorList>
            <person name="Casutt M.S."/>
            <person name="Schlosser A."/>
            <person name="Buckel W."/>
            <person name="Steuber J."/>
        </authorList>
    </citation>
    <scope>COFACTOR</scope>
    <scope>PROSTHETIC GROUP AT THR-225</scope>
</reference>
<protein>
    <recommendedName>
        <fullName evidence="2">Na(+)-translocating NADH-quinone reductase subunit C</fullName>
        <shortName evidence="2">Na(+)-NQR subunit C</shortName>
        <shortName evidence="2">Na(+)-translocating NQR subunit C</shortName>
        <ecNumber evidence="2 4">7.2.1.1</ecNumber>
    </recommendedName>
    <alternativeName>
        <fullName evidence="2">NQR complex subunit C</fullName>
    </alternativeName>
    <alternativeName>
        <fullName evidence="2">NQR-1 subunit C</fullName>
    </alternativeName>
</protein>
<sequence>MASNNDSIKKTLFVVIALSLVCSIIVSAAAVGLRDKQKENAALDKQSKILQVAGIEAKGSKQIVELFNKSIEPRLVDFNTGDFVEGDAANYDQRKAAKEASESIKLTAEQDKAKIQRRANVGVVYLVKDGDKTSKVILPVHGNGLWSMMYAFVAVETDGNTVSGLTYYEQGETPGLGGEVENPAWRAQWVGKKLFDENHKPAIKIVKGGAPQGSEHGVDGLSGATLTSNGVQNTFDFWLGDMGFGPFLTKVRDGGLN</sequence>
<organism>
    <name type="scientific">Vibrio cholerae serotype O1 (strain ATCC 39541 / Classical Ogawa 395 / O395)</name>
    <dbReference type="NCBI Taxonomy" id="345073"/>
    <lineage>
        <taxon>Bacteria</taxon>
        <taxon>Pseudomonadati</taxon>
        <taxon>Pseudomonadota</taxon>
        <taxon>Gammaproteobacteria</taxon>
        <taxon>Vibrionales</taxon>
        <taxon>Vibrionaceae</taxon>
        <taxon>Vibrio</taxon>
    </lineage>
</organism>
<evidence type="ECO:0000250" key="1">
    <source>
        <dbReference type="UniProtKB" id="Q56582"/>
    </source>
</evidence>
<evidence type="ECO:0000255" key="2">
    <source>
        <dbReference type="HAMAP-Rule" id="MF_00427"/>
    </source>
</evidence>
<evidence type="ECO:0000269" key="3">
    <source>
    </source>
</evidence>
<evidence type="ECO:0000269" key="4">
    <source>
    </source>
</evidence>
<evidence type="ECO:0000269" key="5">
    <source>
    </source>
</evidence>
<evidence type="ECO:0000269" key="6">
    <source>
    </source>
</evidence>
<evidence type="ECO:0000303" key="7">
    <source>
    </source>
</evidence>
<evidence type="ECO:0000305" key="8"/>
<evidence type="ECO:0007829" key="9">
    <source>
        <dbReference type="PDB" id="4U9S"/>
    </source>
</evidence>
<evidence type="ECO:0007829" key="10">
    <source>
        <dbReference type="PDB" id="8A1V"/>
    </source>
</evidence>
<evidence type="ECO:0007829" key="11">
    <source>
        <dbReference type="PDB" id="8A1W"/>
    </source>
</evidence>
<evidence type="ECO:0007829" key="12">
    <source>
        <dbReference type="PDB" id="8EW3"/>
    </source>
</evidence>
<gene>
    <name evidence="2 7" type="primary">nqrC</name>
    <name type="ordered locus">VC0395_A1882</name>
    <name type="ordered locus">VC395_2409</name>
</gene>
<name>NQRC_VIBC3</name>
<feature type="initiator methionine" description="Removed" evidence="1">
    <location>
        <position position="1"/>
    </location>
</feature>
<feature type="chain" id="PRO_0000321863" description="Na(+)-translocating NADH-quinone reductase subunit C">
    <location>
        <begin position="2"/>
        <end position="257"/>
    </location>
</feature>
<feature type="transmembrane region" description="Helical" evidence="2">
    <location>
        <begin position="12"/>
        <end position="32"/>
    </location>
</feature>
<feature type="modified residue" description="FMN phosphoryl threonine" evidence="2 6">
    <location>
        <position position="225"/>
    </location>
</feature>
<feature type="mutagenesis site" description="Decrease in FMN binding." evidence="3">
    <original>H</original>
    <variation>L</variation>
    <location>
        <position position="216"/>
    </location>
</feature>
<feature type="mutagenesis site" description="Loss of FMN binding." evidence="3">
    <original>T</original>
    <variation>L</variation>
    <location>
        <position position="225"/>
    </location>
</feature>
<feature type="helix" evidence="12">
    <location>
        <begin position="8"/>
        <end position="32"/>
    </location>
</feature>
<feature type="helix" evidence="9">
    <location>
        <begin position="44"/>
        <end position="52"/>
    </location>
</feature>
<feature type="helix" evidence="9">
    <location>
        <begin position="60"/>
        <end position="70"/>
    </location>
</feature>
<feature type="strand" evidence="9">
    <location>
        <begin position="71"/>
        <end position="77"/>
    </location>
</feature>
<feature type="turn" evidence="9">
    <location>
        <begin position="78"/>
        <end position="80"/>
    </location>
</feature>
<feature type="strand" evidence="10">
    <location>
        <begin position="82"/>
        <end position="84"/>
    </location>
</feature>
<feature type="turn" evidence="9">
    <location>
        <begin position="88"/>
        <end position="90"/>
    </location>
</feature>
<feature type="helix" evidence="9">
    <location>
        <begin position="93"/>
        <end position="97"/>
    </location>
</feature>
<feature type="helix" evidence="9">
    <location>
        <begin position="100"/>
        <end position="102"/>
    </location>
</feature>
<feature type="strand" evidence="9">
    <location>
        <begin position="103"/>
        <end position="105"/>
    </location>
</feature>
<feature type="turn" evidence="9">
    <location>
        <begin position="108"/>
        <end position="110"/>
    </location>
</feature>
<feature type="strand" evidence="12">
    <location>
        <begin position="112"/>
        <end position="114"/>
    </location>
</feature>
<feature type="strand" evidence="9">
    <location>
        <begin position="117"/>
        <end position="129"/>
    </location>
</feature>
<feature type="strand" evidence="9">
    <location>
        <begin position="132"/>
        <end position="143"/>
    </location>
</feature>
<feature type="strand" evidence="9">
    <location>
        <begin position="145"/>
        <end position="156"/>
    </location>
</feature>
<feature type="strand" evidence="9">
    <location>
        <begin position="159"/>
        <end position="169"/>
    </location>
</feature>
<feature type="turn" evidence="9">
    <location>
        <begin position="174"/>
        <end position="176"/>
    </location>
</feature>
<feature type="helix" evidence="9">
    <location>
        <begin position="177"/>
        <end position="181"/>
    </location>
</feature>
<feature type="helix" evidence="9">
    <location>
        <begin position="183"/>
        <end position="187"/>
    </location>
</feature>
<feature type="turn" evidence="9">
    <location>
        <begin position="188"/>
        <end position="191"/>
    </location>
</feature>
<feature type="strand" evidence="9">
    <location>
        <begin position="193"/>
        <end position="195"/>
    </location>
</feature>
<feature type="strand" evidence="11">
    <location>
        <begin position="199"/>
        <end position="201"/>
    </location>
</feature>
<feature type="strand" evidence="9">
    <location>
        <begin position="204"/>
        <end position="206"/>
    </location>
</feature>
<feature type="strand" evidence="9">
    <location>
        <begin position="215"/>
        <end position="219"/>
    </location>
</feature>
<feature type="helix" evidence="9">
    <location>
        <begin position="225"/>
        <end position="238"/>
    </location>
</feature>
<feature type="turn" evidence="9">
    <location>
        <begin position="241"/>
        <end position="244"/>
    </location>
</feature>
<feature type="helix" evidence="9">
    <location>
        <begin position="245"/>
        <end position="252"/>
    </location>
</feature>
<feature type="turn" evidence="9">
    <location>
        <begin position="253"/>
        <end position="256"/>
    </location>
</feature>
<accession>A5F5Y7</accession>
<accession>C3M417</accession>
<accession>Q9X4Q5</accession>